<name>ATPG_ARTS2</name>
<keyword id="KW-0066">ATP synthesis</keyword>
<keyword id="KW-1003">Cell membrane</keyword>
<keyword id="KW-0139">CF(1)</keyword>
<keyword id="KW-0375">Hydrogen ion transport</keyword>
<keyword id="KW-0406">Ion transport</keyword>
<keyword id="KW-0472">Membrane</keyword>
<keyword id="KW-1185">Reference proteome</keyword>
<keyword id="KW-0813">Transport</keyword>
<reference key="1">
    <citation type="journal article" date="2013" name="Stand. Genomic Sci.">
        <title>Complete genome sequence of Arthrobacter sp. strain FB24.</title>
        <authorList>
            <person name="Nakatsu C.H."/>
            <person name="Barabote R."/>
            <person name="Thompson S."/>
            <person name="Bruce D."/>
            <person name="Detter C."/>
            <person name="Brettin T."/>
            <person name="Han C."/>
            <person name="Beasley F."/>
            <person name="Chen W."/>
            <person name="Konopka A."/>
            <person name="Xie G."/>
        </authorList>
    </citation>
    <scope>NUCLEOTIDE SEQUENCE [LARGE SCALE GENOMIC DNA]</scope>
    <source>
        <strain>FB24</strain>
    </source>
</reference>
<organism>
    <name type="scientific">Arthrobacter sp. (strain FB24)</name>
    <dbReference type="NCBI Taxonomy" id="290399"/>
    <lineage>
        <taxon>Bacteria</taxon>
        <taxon>Bacillati</taxon>
        <taxon>Actinomycetota</taxon>
        <taxon>Actinomycetes</taxon>
        <taxon>Micrococcales</taxon>
        <taxon>Micrococcaceae</taxon>
        <taxon>Arthrobacter</taxon>
    </lineage>
</organism>
<gene>
    <name evidence="1" type="primary">atpG</name>
    <name type="ordered locus">Arth_2606</name>
</gene>
<proteinExistence type="inferred from homology"/>
<dbReference type="EMBL" id="CP000454">
    <property type="protein sequence ID" value="ABK03985.1"/>
    <property type="molecule type" value="Genomic_DNA"/>
</dbReference>
<dbReference type="RefSeq" id="WP_011692447.1">
    <property type="nucleotide sequence ID" value="NC_008541.1"/>
</dbReference>
<dbReference type="SMR" id="A0JY65"/>
<dbReference type="STRING" id="290399.Arth_2606"/>
<dbReference type="KEGG" id="art:Arth_2606"/>
<dbReference type="eggNOG" id="COG0224">
    <property type="taxonomic scope" value="Bacteria"/>
</dbReference>
<dbReference type="HOGENOM" id="CLU_050669_0_0_11"/>
<dbReference type="OrthoDB" id="9812769at2"/>
<dbReference type="Proteomes" id="UP000000754">
    <property type="component" value="Chromosome"/>
</dbReference>
<dbReference type="GO" id="GO:0005886">
    <property type="term" value="C:plasma membrane"/>
    <property type="evidence" value="ECO:0007669"/>
    <property type="project" value="UniProtKB-SubCell"/>
</dbReference>
<dbReference type="GO" id="GO:0045259">
    <property type="term" value="C:proton-transporting ATP synthase complex"/>
    <property type="evidence" value="ECO:0007669"/>
    <property type="project" value="UniProtKB-KW"/>
</dbReference>
<dbReference type="GO" id="GO:0005524">
    <property type="term" value="F:ATP binding"/>
    <property type="evidence" value="ECO:0007669"/>
    <property type="project" value="UniProtKB-UniRule"/>
</dbReference>
<dbReference type="GO" id="GO:0046933">
    <property type="term" value="F:proton-transporting ATP synthase activity, rotational mechanism"/>
    <property type="evidence" value="ECO:0007669"/>
    <property type="project" value="UniProtKB-UniRule"/>
</dbReference>
<dbReference type="GO" id="GO:0042777">
    <property type="term" value="P:proton motive force-driven plasma membrane ATP synthesis"/>
    <property type="evidence" value="ECO:0007669"/>
    <property type="project" value="UniProtKB-UniRule"/>
</dbReference>
<dbReference type="CDD" id="cd12151">
    <property type="entry name" value="F1-ATPase_gamma"/>
    <property type="match status" value="1"/>
</dbReference>
<dbReference type="Gene3D" id="3.40.1380.10">
    <property type="match status" value="1"/>
</dbReference>
<dbReference type="Gene3D" id="1.10.287.80">
    <property type="entry name" value="ATP synthase, gamma subunit, helix hairpin domain"/>
    <property type="match status" value="1"/>
</dbReference>
<dbReference type="HAMAP" id="MF_00815">
    <property type="entry name" value="ATP_synth_gamma_bact"/>
    <property type="match status" value="1"/>
</dbReference>
<dbReference type="InterPro" id="IPR035968">
    <property type="entry name" value="ATP_synth_F1_ATPase_gsu"/>
</dbReference>
<dbReference type="InterPro" id="IPR000131">
    <property type="entry name" value="ATP_synth_F1_gsu"/>
</dbReference>
<dbReference type="InterPro" id="IPR023632">
    <property type="entry name" value="ATP_synth_F1_gsu_CS"/>
</dbReference>
<dbReference type="NCBIfam" id="TIGR01146">
    <property type="entry name" value="ATPsyn_F1gamma"/>
    <property type="match status" value="1"/>
</dbReference>
<dbReference type="NCBIfam" id="NF004145">
    <property type="entry name" value="PRK05621.1-2"/>
    <property type="match status" value="1"/>
</dbReference>
<dbReference type="PANTHER" id="PTHR11693">
    <property type="entry name" value="ATP SYNTHASE GAMMA CHAIN"/>
    <property type="match status" value="1"/>
</dbReference>
<dbReference type="PANTHER" id="PTHR11693:SF22">
    <property type="entry name" value="ATP SYNTHASE SUBUNIT GAMMA, MITOCHONDRIAL"/>
    <property type="match status" value="1"/>
</dbReference>
<dbReference type="Pfam" id="PF00231">
    <property type="entry name" value="ATP-synt"/>
    <property type="match status" value="1"/>
</dbReference>
<dbReference type="PRINTS" id="PR00126">
    <property type="entry name" value="ATPASEGAMMA"/>
</dbReference>
<dbReference type="SUPFAM" id="SSF52943">
    <property type="entry name" value="ATP synthase (F1-ATPase), gamma subunit"/>
    <property type="match status" value="1"/>
</dbReference>
<dbReference type="PROSITE" id="PS00153">
    <property type="entry name" value="ATPASE_GAMMA"/>
    <property type="match status" value="1"/>
</dbReference>
<accession>A0JY65</accession>
<comment type="function">
    <text evidence="1">Produces ATP from ADP in the presence of a proton gradient across the membrane. The gamma chain is believed to be important in regulating ATPase activity and the flow of protons through the CF(0) complex.</text>
</comment>
<comment type="subunit">
    <text evidence="1">F-type ATPases have 2 components, CF(1) - the catalytic core - and CF(0) - the membrane proton channel. CF(1) has five subunits: alpha(3), beta(3), gamma(1), delta(1), epsilon(1). CF(0) has three main subunits: a, b and c.</text>
</comment>
<comment type="subcellular location">
    <subcellularLocation>
        <location evidence="1">Cell membrane</location>
        <topology evidence="1">Peripheral membrane protein</topology>
    </subcellularLocation>
</comment>
<comment type="similarity">
    <text evidence="1">Belongs to the ATPase gamma chain family.</text>
</comment>
<evidence type="ECO:0000255" key="1">
    <source>
        <dbReference type="HAMAP-Rule" id="MF_00815"/>
    </source>
</evidence>
<feature type="chain" id="PRO_1000053155" description="ATP synthase gamma chain">
    <location>
        <begin position="1"/>
        <end position="297"/>
    </location>
</feature>
<sequence>MGAQIRVYRQKISSTTSMRKIFKAMELIATSRIGKARARVAASLPYANAITRAVSAVASQSEIDHPLVTEPEQIRRAAVLVITSDRGLAGSYSASVLKQAEGLTELLREEGKEVKTYVVGRKAQAYFDFRNRPYAQVWTGNTDSPVFATAQEIGAALLEDFATAYEEGGVDEIHVVYTRFKSMVTQEPTVIRLLPLEVVEEQAASESDLLPLYEFEPETEQVLDALLPRYIESRIFAAMLQAAASELAARQRAMKSAGDNATDLIKKYTRLRNTARQAEITQELSEIVAGADALNAS</sequence>
<protein>
    <recommendedName>
        <fullName evidence="1">ATP synthase gamma chain</fullName>
    </recommendedName>
    <alternativeName>
        <fullName evidence="1">ATP synthase F1 sector gamma subunit</fullName>
    </alternativeName>
    <alternativeName>
        <fullName evidence="1">F-ATPase gamma subunit</fullName>
    </alternativeName>
</protein>